<organism>
    <name type="scientific">Dichelobacter nodosus (strain VCS1703A)</name>
    <dbReference type="NCBI Taxonomy" id="246195"/>
    <lineage>
        <taxon>Bacteria</taxon>
        <taxon>Pseudomonadati</taxon>
        <taxon>Pseudomonadota</taxon>
        <taxon>Gammaproteobacteria</taxon>
        <taxon>Cardiobacteriales</taxon>
        <taxon>Cardiobacteriaceae</taxon>
        <taxon>Dichelobacter</taxon>
    </lineage>
</organism>
<protein>
    <recommendedName>
        <fullName evidence="1">Large ribosomal subunit protein bL20</fullName>
    </recommendedName>
    <alternativeName>
        <fullName evidence="2">50S ribosomal protein L20</fullName>
    </alternativeName>
</protein>
<accession>A5EVM2</accession>
<dbReference type="EMBL" id="CP000513">
    <property type="protein sequence ID" value="ABQ13446.1"/>
    <property type="molecule type" value="Genomic_DNA"/>
</dbReference>
<dbReference type="RefSeq" id="WP_012030859.1">
    <property type="nucleotide sequence ID" value="NC_009446.1"/>
</dbReference>
<dbReference type="SMR" id="A5EVM2"/>
<dbReference type="STRING" id="246195.DNO_0524"/>
<dbReference type="KEGG" id="dno:DNO_0524"/>
<dbReference type="eggNOG" id="COG0292">
    <property type="taxonomic scope" value="Bacteria"/>
</dbReference>
<dbReference type="HOGENOM" id="CLU_123265_0_1_6"/>
<dbReference type="OrthoDB" id="9808966at2"/>
<dbReference type="Proteomes" id="UP000000248">
    <property type="component" value="Chromosome"/>
</dbReference>
<dbReference type="GO" id="GO:1990904">
    <property type="term" value="C:ribonucleoprotein complex"/>
    <property type="evidence" value="ECO:0007669"/>
    <property type="project" value="UniProtKB-KW"/>
</dbReference>
<dbReference type="GO" id="GO:0005840">
    <property type="term" value="C:ribosome"/>
    <property type="evidence" value="ECO:0007669"/>
    <property type="project" value="UniProtKB-KW"/>
</dbReference>
<dbReference type="GO" id="GO:0019843">
    <property type="term" value="F:rRNA binding"/>
    <property type="evidence" value="ECO:0007669"/>
    <property type="project" value="UniProtKB-UniRule"/>
</dbReference>
<dbReference type="GO" id="GO:0003735">
    <property type="term" value="F:structural constituent of ribosome"/>
    <property type="evidence" value="ECO:0007669"/>
    <property type="project" value="InterPro"/>
</dbReference>
<dbReference type="GO" id="GO:0000027">
    <property type="term" value="P:ribosomal large subunit assembly"/>
    <property type="evidence" value="ECO:0007669"/>
    <property type="project" value="UniProtKB-UniRule"/>
</dbReference>
<dbReference type="GO" id="GO:0006412">
    <property type="term" value="P:translation"/>
    <property type="evidence" value="ECO:0007669"/>
    <property type="project" value="InterPro"/>
</dbReference>
<dbReference type="CDD" id="cd07026">
    <property type="entry name" value="Ribosomal_L20"/>
    <property type="match status" value="1"/>
</dbReference>
<dbReference type="FunFam" id="1.10.1900.20:FF:000001">
    <property type="entry name" value="50S ribosomal protein L20"/>
    <property type="match status" value="1"/>
</dbReference>
<dbReference type="Gene3D" id="6.10.160.10">
    <property type="match status" value="1"/>
</dbReference>
<dbReference type="Gene3D" id="1.10.1900.20">
    <property type="entry name" value="Ribosomal protein L20"/>
    <property type="match status" value="1"/>
</dbReference>
<dbReference type="HAMAP" id="MF_00382">
    <property type="entry name" value="Ribosomal_bL20"/>
    <property type="match status" value="1"/>
</dbReference>
<dbReference type="InterPro" id="IPR005813">
    <property type="entry name" value="Ribosomal_bL20"/>
</dbReference>
<dbReference type="InterPro" id="IPR049946">
    <property type="entry name" value="RIBOSOMAL_L20_CS"/>
</dbReference>
<dbReference type="InterPro" id="IPR035566">
    <property type="entry name" value="Ribosomal_protein_bL20_C"/>
</dbReference>
<dbReference type="NCBIfam" id="TIGR01032">
    <property type="entry name" value="rplT_bact"/>
    <property type="match status" value="1"/>
</dbReference>
<dbReference type="PANTHER" id="PTHR10986">
    <property type="entry name" value="39S RIBOSOMAL PROTEIN L20"/>
    <property type="match status" value="1"/>
</dbReference>
<dbReference type="Pfam" id="PF00453">
    <property type="entry name" value="Ribosomal_L20"/>
    <property type="match status" value="1"/>
</dbReference>
<dbReference type="PRINTS" id="PR00062">
    <property type="entry name" value="RIBOSOMALL20"/>
</dbReference>
<dbReference type="SUPFAM" id="SSF74731">
    <property type="entry name" value="Ribosomal protein L20"/>
    <property type="match status" value="1"/>
</dbReference>
<dbReference type="PROSITE" id="PS00937">
    <property type="entry name" value="RIBOSOMAL_L20"/>
    <property type="match status" value="1"/>
</dbReference>
<proteinExistence type="inferred from homology"/>
<keyword id="KW-1185">Reference proteome</keyword>
<keyword id="KW-0687">Ribonucleoprotein</keyword>
<keyword id="KW-0689">Ribosomal protein</keyword>
<keyword id="KW-0694">RNA-binding</keyword>
<keyword id="KW-0699">rRNA-binding</keyword>
<name>RL20_DICNV</name>
<reference key="1">
    <citation type="journal article" date="2007" name="Nat. Biotechnol.">
        <title>Genome sequence and identification of candidate vaccine antigens from the animal pathogen Dichelobacter nodosus.</title>
        <authorList>
            <person name="Myers G.S.A."/>
            <person name="Parker D."/>
            <person name="Al-Hasani K."/>
            <person name="Kennan R.M."/>
            <person name="Seemann T."/>
            <person name="Ren Q."/>
            <person name="Badger J.H."/>
            <person name="Selengut J.D."/>
            <person name="Deboy R.T."/>
            <person name="Tettelin H."/>
            <person name="Boyce J.D."/>
            <person name="McCarl V.P."/>
            <person name="Han X."/>
            <person name="Nelson W.C."/>
            <person name="Madupu R."/>
            <person name="Mohamoud Y."/>
            <person name="Holley T."/>
            <person name="Fedorova N."/>
            <person name="Khouri H."/>
            <person name="Bottomley S.P."/>
            <person name="Whittington R.J."/>
            <person name="Adler B."/>
            <person name="Songer J.G."/>
            <person name="Rood J.I."/>
            <person name="Paulsen I.T."/>
        </authorList>
    </citation>
    <scope>NUCLEOTIDE SEQUENCE [LARGE SCALE GENOMIC DNA]</scope>
    <source>
        <strain>VCS1703A</strain>
    </source>
</reference>
<comment type="function">
    <text evidence="1">Binds directly to 23S ribosomal RNA and is necessary for the in vitro assembly process of the 50S ribosomal subunit. It is not involved in the protein synthesizing functions of that subunit.</text>
</comment>
<comment type="similarity">
    <text evidence="1">Belongs to the bacterial ribosomal protein bL20 family.</text>
</comment>
<evidence type="ECO:0000255" key="1">
    <source>
        <dbReference type="HAMAP-Rule" id="MF_00382"/>
    </source>
</evidence>
<evidence type="ECO:0000305" key="2"/>
<gene>
    <name evidence="1" type="primary">rplT</name>
    <name type="ordered locus">DNO_0524</name>
</gene>
<sequence>MARVKRGVQAHARHKKVLKAAKGYYSARRKTFRVAKQAVIKAGQYAYRDRKTKKRQFRQLWIIRINAGARIHGLSYSRFINGLKKSGIAVDRKILSELAVYDKSVFATLAEKAKAALSA</sequence>
<feature type="chain" id="PRO_1000048970" description="Large ribosomal subunit protein bL20">
    <location>
        <begin position="1"/>
        <end position="119"/>
    </location>
</feature>